<accession>Q5PBP6</accession>
<feature type="chain" id="PRO_0000297215" description="3-methyl-2-oxobutanoate hydroxymethyltransferase">
    <location>
        <begin position="1"/>
        <end position="277"/>
    </location>
</feature>
<feature type="active site" description="Proton acceptor" evidence="1">
    <location>
        <position position="179"/>
    </location>
</feature>
<feature type="binding site" evidence="1">
    <location>
        <begin position="42"/>
        <end position="43"/>
    </location>
    <ligand>
        <name>3-methyl-2-oxobutanoate</name>
        <dbReference type="ChEBI" id="CHEBI:11851"/>
    </ligand>
</feature>
<feature type="binding site" evidence="1">
    <location>
        <position position="42"/>
    </location>
    <ligand>
        <name>Mg(2+)</name>
        <dbReference type="ChEBI" id="CHEBI:18420"/>
    </ligand>
</feature>
<feature type="binding site" evidence="1">
    <location>
        <position position="81"/>
    </location>
    <ligand>
        <name>3-methyl-2-oxobutanoate</name>
        <dbReference type="ChEBI" id="CHEBI:11851"/>
    </ligand>
</feature>
<feature type="binding site" evidence="1">
    <location>
        <position position="81"/>
    </location>
    <ligand>
        <name>Mg(2+)</name>
        <dbReference type="ChEBI" id="CHEBI:18420"/>
    </ligand>
</feature>
<feature type="binding site" evidence="1">
    <location>
        <position position="110"/>
    </location>
    <ligand>
        <name>3-methyl-2-oxobutanoate</name>
        <dbReference type="ChEBI" id="CHEBI:11851"/>
    </ligand>
</feature>
<feature type="binding site" evidence="1">
    <location>
        <position position="112"/>
    </location>
    <ligand>
        <name>Mg(2+)</name>
        <dbReference type="ChEBI" id="CHEBI:18420"/>
    </ligand>
</feature>
<keyword id="KW-0963">Cytoplasm</keyword>
<keyword id="KW-0460">Magnesium</keyword>
<keyword id="KW-0479">Metal-binding</keyword>
<keyword id="KW-0566">Pantothenate biosynthesis</keyword>
<keyword id="KW-0808">Transferase</keyword>
<gene>
    <name evidence="1" type="primary">panB</name>
    <name type="ordered locus">AM142</name>
</gene>
<organism>
    <name type="scientific">Anaplasma marginale (strain St. Maries)</name>
    <dbReference type="NCBI Taxonomy" id="234826"/>
    <lineage>
        <taxon>Bacteria</taxon>
        <taxon>Pseudomonadati</taxon>
        <taxon>Pseudomonadota</taxon>
        <taxon>Alphaproteobacteria</taxon>
        <taxon>Rickettsiales</taxon>
        <taxon>Anaplasmataceae</taxon>
        <taxon>Anaplasma</taxon>
    </lineage>
</organism>
<evidence type="ECO:0000255" key="1">
    <source>
        <dbReference type="HAMAP-Rule" id="MF_00156"/>
    </source>
</evidence>
<comment type="function">
    <text evidence="1">Catalyzes the reversible reaction in which hydroxymethyl group from 5,10-methylenetetrahydrofolate is transferred onto alpha-ketoisovalerate to form ketopantoate.</text>
</comment>
<comment type="catalytic activity">
    <reaction evidence="1">
        <text>3-methyl-2-oxobutanoate + (6R)-5,10-methylene-5,6,7,8-tetrahydrofolate + H2O = 2-dehydropantoate + (6S)-5,6,7,8-tetrahydrofolate</text>
        <dbReference type="Rhea" id="RHEA:11824"/>
        <dbReference type="ChEBI" id="CHEBI:11561"/>
        <dbReference type="ChEBI" id="CHEBI:11851"/>
        <dbReference type="ChEBI" id="CHEBI:15377"/>
        <dbReference type="ChEBI" id="CHEBI:15636"/>
        <dbReference type="ChEBI" id="CHEBI:57453"/>
        <dbReference type="EC" id="2.1.2.11"/>
    </reaction>
</comment>
<comment type="cofactor">
    <cofactor evidence="1">
        <name>Mg(2+)</name>
        <dbReference type="ChEBI" id="CHEBI:18420"/>
    </cofactor>
    <text evidence="1">Binds 1 Mg(2+) ion per subunit.</text>
</comment>
<comment type="pathway">
    <text evidence="1">Cofactor biosynthesis; (R)-pantothenate biosynthesis; (R)-pantoate from 3-methyl-2-oxobutanoate: step 1/2.</text>
</comment>
<comment type="subunit">
    <text evidence="1">Homodecamer; pentamer of dimers.</text>
</comment>
<comment type="subcellular location">
    <subcellularLocation>
        <location evidence="1">Cytoplasm</location>
    </subcellularLocation>
</comment>
<comment type="similarity">
    <text evidence="1">Belongs to the PanB family.</text>
</comment>
<proteinExistence type="inferred from homology"/>
<name>PANB_ANAMM</name>
<reference key="1">
    <citation type="journal article" date="2005" name="Proc. Natl. Acad. Sci. U.S.A.">
        <title>Complete genome sequencing of Anaplasma marginale reveals that the surface is skewed to two superfamilies of outer membrane proteins.</title>
        <authorList>
            <person name="Brayton K.A."/>
            <person name="Kappmeyer L.S."/>
            <person name="Herndon D.R."/>
            <person name="Dark M.J."/>
            <person name="Tibbals D.L."/>
            <person name="Palmer G.H."/>
            <person name="McGuire T.C."/>
            <person name="Knowles D.P. Jr."/>
        </authorList>
    </citation>
    <scope>NUCLEOTIDE SEQUENCE [LARGE SCALE GENOMIC DNA]</scope>
    <source>
        <strain>St. Maries</strain>
    </source>
</reference>
<protein>
    <recommendedName>
        <fullName evidence="1">3-methyl-2-oxobutanoate hydroxymethyltransferase</fullName>
        <ecNumber evidence="1">2.1.2.11</ecNumber>
    </recommendedName>
    <alternativeName>
        <fullName evidence="1">Ketopantoate hydroxymethyltransferase</fullName>
        <shortName evidence="1">KPHMT</shortName>
    </alternativeName>
</protein>
<dbReference type="EC" id="2.1.2.11" evidence="1"/>
<dbReference type="EMBL" id="CP000030">
    <property type="protein sequence ID" value="AAV86283.1"/>
    <property type="molecule type" value="Genomic_DNA"/>
</dbReference>
<dbReference type="RefSeq" id="WP_011114134.1">
    <property type="nucleotide sequence ID" value="NZ_AFMU01000019.1"/>
</dbReference>
<dbReference type="SMR" id="Q5PBP6"/>
<dbReference type="KEGG" id="ama:AM142"/>
<dbReference type="HOGENOM" id="CLU_036645_1_0_5"/>
<dbReference type="UniPathway" id="UPA00028">
    <property type="reaction ID" value="UER00003"/>
</dbReference>
<dbReference type="GO" id="GO:0005737">
    <property type="term" value="C:cytoplasm"/>
    <property type="evidence" value="ECO:0007669"/>
    <property type="project" value="UniProtKB-SubCell"/>
</dbReference>
<dbReference type="GO" id="GO:0003864">
    <property type="term" value="F:3-methyl-2-oxobutanoate hydroxymethyltransferase activity"/>
    <property type="evidence" value="ECO:0007669"/>
    <property type="project" value="UniProtKB-UniRule"/>
</dbReference>
<dbReference type="GO" id="GO:0000287">
    <property type="term" value="F:magnesium ion binding"/>
    <property type="evidence" value="ECO:0007669"/>
    <property type="project" value="TreeGrafter"/>
</dbReference>
<dbReference type="GO" id="GO:0015940">
    <property type="term" value="P:pantothenate biosynthetic process"/>
    <property type="evidence" value="ECO:0007669"/>
    <property type="project" value="UniProtKB-UniRule"/>
</dbReference>
<dbReference type="CDD" id="cd06557">
    <property type="entry name" value="KPHMT-like"/>
    <property type="match status" value="1"/>
</dbReference>
<dbReference type="FunFam" id="3.20.20.60:FF:000003">
    <property type="entry name" value="3-methyl-2-oxobutanoate hydroxymethyltransferase"/>
    <property type="match status" value="1"/>
</dbReference>
<dbReference type="Gene3D" id="3.20.20.60">
    <property type="entry name" value="Phosphoenolpyruvate-binding domains"/>
    <property type="match status" value="1"/>
</dbReference>
<dbReference type="HAMAP" id="MF_00156">
    <property type="entry name" value="PanB"/>
    <property type="match status" value="1"/>
</dbReference>
<dbReference type="InterPro" id="IPR003700">
    <property type="entry name" value="Pantoate_hydroxy_MeTrfase"/>
</dbReference>
<dbReference type="InterPro" id="IPR015813">
    <property type="entry name" value="Pyrv/PenolPyrv_kinase-like_dom"/>
</dbReference>
<dbReference type="InterPro" id="IPR040442">
    <property type="entry name" value="Pyrv_kinase-like_dom_sf"/>
</dbReference>
<dbReference type="NCBIfam" id="TIGR00222">
    <property type="entry name" value="panB"/>
    <property type="match status" value="1"/>
</dbReference>
<dbReference type="NCBIfam" id="NF001452">
    <property type="entry name" value="PRK00311.1"/>
    <property type="match status" value="1"/>
</dbReference>
<dbReference type="PANTHER" id="PTHR20881">
    <property type="entry name" value="3-METHYL-2-OXOBUTANOATE HYDROXYMETHYLTRANSFERASE"/>
    <property type="match status" value="1"/>
</dbReference>
<dbReference type="PANTHER" id="PTHR20881:SF0">
    <property type="entry name" value="3-METHYL-2-OXOBUTANOATE HYDROXYMETHYLTRANSFERASE"/>
    <property type="match status" value="1"/>
</dbReference>
<dbReference type="Pfam" id="PF02548">
    <property type="entry name" value="Pantoate_transf"/>
    <property type="match status" value="1"/>
</dbReference>
<dbReference type="PIRSF" id="PIRSF000388">
    <property type="entry name" value="Pantoate_hydroxy_MeTrfase"/>
    <property type="match status" value="1"/>
</dbReference>
<dbReference type="SUPFAM" id="SSF51621">
    <property type="entry name" value="Phosphoenolpyruvate/pyruvate domain"/>
    <property type="match status" value="1"/>
</dbReference>
<sequence>MLLNILDIQAKKGLEKIACLTAYTFPMARILDEHCDLILVGDSVGQTVYGMESTLSVTLDMMIAHGKAVVKARSKALVVVDMPFASYYTPELAYKNASRILSETGCDAVKLEGGVCVAEEIAFLVARGIPVMGHVGLMPQHFNQLGGYKCQGKTDSSRQHIKEDAKAVCEAGAFCVVLECISPSLAAELTQELPVPTIGIGASNACDGQILVVDDMLGQSSRYPKFVKRFADLEHTIKDAVVGYVRAVKCSEFPGDEHCYSDGPHLRVFRAHPHHAQ</sequence>